<keyword id="KW-0694">RNA-binding</keyword>
<keyword id="KW-0804">Transcription</keyword>
<keyword id="KW-0889">Transcription antitermination</keyword>
<keyword id="KW-0805">Transcription regulation</keyword>
<protein>
    <recommendedName>
        <fullName evidence="1">Transcription antitermination protein NusB</fullName>
    </recommendedName>
    <alternativeName>
        <fullName evidence="1">Antitermination factor NusB</fullName>
    </alternativeName>
</protein>
<name>NUSB_XANOP</name>
<feature type="chain" id="PRO_1000092601" description="Transcription antitermination protein NusB">
    <location>
        <begin position="1"/>
        <end position="156"/>
    </location>
</feature>
<proteinExistence type="inferred from homology"/>
<organism>
    <name type="scientific">Xanthomonas oryzae pv. oryzae (strain PXO99A)</name>
    <dbReference type="NCBI Taxonomy" id="360094"/>
    <lineage>
        <taxon>Bacteria</taxon>
        <taxon>Pseudomonadati</taxon>
        <taxon>Pseudomonadota</taxon>
        <taxon>Gammaproteobacteria</taxon>
        <taxon>Lysobacterales</taxon>
        <taxon>Lysobacteraceae</taxon>
        <taxon>Xanthomonas</taxon>
    </lineage>
</organism>
<comment type="function">
    <text evidence="1">Involved in transcription antitermination. Required for transcription of ribosomal RNA (rRNA) genes. Binds specifically to the boxA antiterminator sequence of the ribosomal RNA (rrn) operons.</text>
</comment>
<comment type="similarity">
    <text evidence="1">Belongs to the NusB family.</text>
</comment>
<evidence type="ECO:0000255" key="1">
    <source>
        <dbReference type="HAMAP-Rule" id="MF_00073"/>
    </source>
</evidence>
<dbReference type="EMBL" id="CP000967">
    <property type="protein sequence ID" value="ACD57666.1"/>
    <property type="molecule type" value="Genomic_DNA"/>
</dbReference>
<dbReference type="RefSeq" id="WP_011260254.1">
    <property type="nucleotide sequence ID" value="NC_010717.2"/>
</dbReference>
<dbReference type="SMR" id="B2SNW5"/>
<dbReference type="KEGG" id="xop:PXO_04396"/>
<dbReference type="eggNOG" id="COG0781">
    <property type="taxonomic scope" value="Bacteria"/>
</dbReference>
<dbReference type="HOGENOM" id="CLU_087843_4_1_6"/>
<dbReference type="Proteomes" id="UP000001740">
    <property type="component" value="Chromosome"/>
</dbReference>
<dbReference type="GO" id="GO:0005829">
    <property type="term" value="C:cytosol"/>
    <property type="evidence" value="ECO:0007669"/>
    <property type="project" value="TreeGrafter"/>
</dbReference>
<dbReference type="GO" id="GO:0003723">
    <property type="term" value="F:RNA binding"/>
    <property type="evidence" value="ECO:0007669"/>
    <property type="project" value="UniProtKB-UniRule"/>
</dbReference>
<dbReference type="GO" id="GO:0006353">
    <property type="term" value="P:DNA-templated transcription termination"/>
    <property type="evidence" value="ECO:0007669"/>
    <property type="project" value="UniProtKB-UniRule"/>
</dbReference>
<dbReference type="GO" id="GO:0031564">
    <property type="term" value="P:transcription antitermination"/>
    <property type="evidence" value="ECO:0007669"/>
    <property type="project" value="UniProtKB-KW"/>
</dbReference>
<dbReference type="FunFam" id="1.10.940.10:FF:000001">
    <property type="entry name" value="Transcription antitermination factor NusB"/>
    <property type="match status" value="1"/>
</dbReference>
<dbReference type="Gene3D" id="1.10.940.10">
    <property type="entry name" value="NusB-like"/>
    <property type="match status" value="1"/>
</dbReference>
<dbReference type="HAMAP" id="MF_00073">
    <property type="entry name" value="NusB"/>
    <property type="match status" value="1"/>
</dbReference>
<dbReference type="InterPro" id="IPR035926">
    <property type="entry name" value="NusB-like_sf"/>
</dbReference>
<dbReference type="InterPro" id="IPR011605">
    <property type="entry name" value="NusB_fam"/>
</dbReference>
<dbReference type="InterPro" id="IPR006027">
    <property type="entry name" value="NusB_RsmB_TIM44"/>
</dbReference>
<dbReference type="NCBIfam" id="TIGR01951">
    <property type="entry name" value="nusB"/>
    <property type="match status" value="1"/>
</dbReference>
<dbReference type="PANTHER" id="PTHR11078:SF3">
    <property type="entry name" value="ANTITERMINATION NUSB DOMAIN-CONTAINING PROTEIN"/>
    <property type="match status" value="1"/>
</dbReference>
<dbReference type="PANTHER" id="PTHR11078">
    <property type="entry name" value="N UTILIZATION SUBSTANCE PROTEIN B-RELATED"/>
    <property type="match status" value="1"/>
</dbReference>
<dbReference type="Pfam" id="PF01029">
    <property type="entry name" value="NusB"/>
    <property type="match status" value="1"/>
</dbReference>
<dbReference type="SUPFAM" id="SSF48013">
    <property type="entry name" value="NusB-like"/>
    <property type="match status" value="1"/>
</dbReference>
<sequence length="156" mass="17537">MSKPGGHPRHGRRDGIDPVLRSRARRRALQAVYAWQISGGFAKQVIAQFAHEQAHEVADLAYFENLVEGVLTNRAELDTALTPYLDRGVEEVDAIERAVLRLAAYELLYRQDVPYRVVINEAIETAKRFGSEHGHTYVNGVLDRAAVEWRKVESGA</sequence>
<gene>
    <name evidence="1" type="primary">nusB</name>
    <name type="ordered locus">PXO_04396</name>
</gene>
<reference key="1">
    <citation type="journal article" date="2008" name="BMC Genomics">
        <title>Genome sequence and rapid evolution of the rice pathogen Xanthomonas oryzae pv. oryzae PXO99A.</title>
        <authorList>
            <person name="Salzberg S.L."/>
            <person name="Sommer D.D."/>
            <person name="Schatz M.C."/>
            <person name="Phillippy A.M."/>
            <person name="Rabinowicz P.D."/>
            <person name="Tsuge S."/>
            <person name="Furutani A."/>
            <person name="Ochiai H."/>
            <person name="Delcher A.L."/>
            <person name="Kelley D."/>
            <person name="Madupu R."/>
            <person name="Puiu D."/>
            <person name="Radune D."/>
            <person name="Shumway M."/>
            <person name="Trapnell C."/>
            <person name="Aparna G."/>
            <person name="Jha G."/>
            <person name="Pandey A."/>
            <person name="Patil P.B."/>
            <person name="Ishihara H."/>
            <person name="Meyer D.F."/>
            <person name="Szurek B."/>
            <person name="Verdier V."/>
            <person name="Koebnik R."/>
            <person name="Dow J.M."/>
            <person name="Ryan R.P."/>
            <person name="Hirata H."/>
            <person name="Tsuyumu S."/>
            <person name="Won Lee S."/>
            <person name="Seo Y.-S."/>
            <person name="Sriariyanum M."/>
            <person name="Ronald P.C."/>
            <person name="Sonti R.V."/>
            <person name="Van Sluys M.-A."/>
            <person name="Leach J.E."/>
            <person name="White F.F."/>
            <person name="Bogdanove A.J."/>
        </authorList>
    </citation>
    <scope>NUCLEOTIDE SEQUENCE [LARGE SCALE GENOMIC DNA]</scope>
    <source>
        <strain>PXO99A</strain>
    </source>
</reference>
<accession>B2SNW5</accession>